<name>YUC1_ORYSJ</name>
<feature type="chain" id="PRO_0000445279" description="Indole-3-pyruvate monooxygenase YUCCA1">
    <location>
        <begin position="1"/>
        <end position="406"/>
    </location>
</feature>
<feature type="binding site" evidence="1">
    <location>
        <begin position="21"/>
        <end position="26"/>
    </location>
    <ligand>
        <name>FAD</name>
        <dbReference type="ChEBI" id="CHEBI:57692"/>
    </ligand>
</feature>
<feature type="binding site" evidence="1">
    <location>
        <begin position="184"/>
        <end position="189"/>
    </location>
    <ligand>
        <name>NADP(+)</name>
        <dbReference type="ChEBI" id="CHEBI:58349"/>
    </ligand>
</feature>
<feature type="splice variant" id="VSP_059850" description="In isoform 2.">
    <original>DAGDLFTREGISKVPFPNSWRGRNGLYTVGFTQRGLLGTSSDALNVAKDIHCQWRERDRSAINVLEISNSSF</original>
    <variation>VKQSVTHSCSFYFSFCPHCTILLLVIYISR</variation>
    <location>
        <begin position="335"/>
        <end position="406"/>
    </location>
</feature>
<dbReference type="EC" id="1.14.13.168" evidence="7"/>
<dbReference type="EMBL" id="AP002910">
    <property type="protein sequence ID" value="BAD68007.1"/>
    <property type="molecule type" value="Genomic_DNA"/>
</dbReference>
<dbReference type="EMBL" id="AP008207">
    <property type="protein sequence ID" value="BAH91211.1"/>
    <property type="status" value="ALT_SEQ"/>
    <property type="molecule type" value="Genomic_DNA"/>
</dbReference>
<dbReference type="EMBL" id="AP014957">
    <property type="protein sequence ID" value="BAS73400.1"/>
    <property type="molecule type" value="Genomic_DNA"/>
</dbReference>
<dbReference type="EMBL" id="AP014957">
    <property type="protein sequence ID" value="BAS73401.1"/>
    <property type="molecule type" value="Genomic_DNA"/>
</dbReference>
<dbReference type="EMBL" id="AK105488">
    <property type="protein sequence ID" value="BAG97267.1"/>
    <property type="molecule type" value="mRNA"/>
</dbReference>
<dbReference type="RefSeq" id="XP_015643006.1">
    <property type="nucleotide sequence ID" value="XM_015787520.1"/>
</dbReference>
<dbReference type="SMR" id="A0A0P0V5U9"/>
<dbReference type="FunCoup" id="A0A0P0V5U9">
    <property type="interactions" value="13"/>
</dbReference>
<dbReference type="STRING" id="39947.A0A0P0V5U9"/>
<dbReference type="PaxDb" id="39947-A0A0P0V5U9"/>
<dbReference type="EnsemblPlants" id="Os01t0645400-02">
    <molecule id="A0A0P0V5U9-1"/>
    <property type="protein sequence ID" value="Os01t0645400-02"/>
    <property type="gene ID" value="Os01g0645400"/>
</dbReference>
<dbReference type="Gramene" id="Os01t0645400-02">
    <molecule id="A0A0P0V5U9-1"/>
    <property type="protein sequence ID" value="Os01t0645400-02"/>
    <property type="gene ID" value="Os01g0645400"/>
</dbReference>
<dbReference type="KEGG" id="dosa:Os01g0645400"/>
<dbReference type="eggNOG" id="KOG1399">
    <property type="taxonomic scope" value="Eukaryota"/>
</dbReference>
<dbReference type="HOGENOM" id="CLU_006909_2_0_1"/>
<dbReference type="InParanoid" id="A0A0P0V5U9"/>
<dbReference type="OMA" id="DEIKGPT"/>
<dbReference type="OrthoDB" id="66881at2759"/>
<dbReference type="PlantReactome" id="R-OSA-1119486">
    <property type="pathway name" value="IAA biosynthesis I"/>
</dbReference>
<dbReference type="Proteomes" id="UP000000763">
    <property type="component" value="Chromosome 1"/>
</dbReference>
<dbReference type="Proteomes" id="UP000059680">
    <property type="component" value="Chromosome 1"/>
</dbReference>
<dbReference type="GO" id="GO:0050660">
    <property type="term" value="F:flavin adenine dinucleotide binding"/>
    <property type="evidence" value="ECO:0000318"/>
    <property type="project" value="GO_Central"/>
</dbReference>
<dbReference type="GO" id="GO:0103075">
    <property type="term" value="F:indole-3-pyruvate monooxygenase activity"/>
    <property type="evidence" value="ECO:0000314"/>
    <property type="project" value="UniProtKB"/>
</dbReference>
<dbReference type="GO" id="GO:0004497">
    <property type="term" value="F:monooxygenase activity"/>
    <property type="evidence" value="ECO:0000318"/>
    <property type="project" value="GO_Central"/>
</dbReference>
<dbReference type="GO" id="GO:0004499">
    <property type="term" value="F:N,N-dimethylaniline monooxygenase activity"/>
    <property type="evidence" value="ECO:0007669"/>
    <property type="project" value="InterPro"/>
</dbReference>
<dbReference type="GO" id="GO:0050661">
    <property type="term" value="F:NADP binding"/>
    <property type="evidence" value="ECO:0007669"/>
    <property type="project" value="InterPro"/>
</dbReference>
<dbReference type="GO" id="GO:0009851">
    <property type="term" value="P:auxin biosynthetic process"/>
    <property type="evidence" value="ECO:0000314"/>
    <property type="project" value="UniProtKB"/>
</dbReference>
<dbReference type="GO" id="GO:2000280">
    <property type="term" value="P:regulation of root development"/>
    <property type="evidence" value="ECO:0000314"/>
    <property type="project" value="UniProtKB"/>
</dbReference>
<dbReference type="FunFam" id="3.50.50.60:FF:000100">
    <property type="entry name" value="Flavin-containing monooxygenase"/>
    <property type="match status" value="1"/>
</dbReference>
<dbReference type="Gene3D" id="3.50.50.60">
    <property type="entry name" value="FAD/NAD(P)-binding domain"/>
    <property type="match status" value="1"/>
</dbReference>
<dbReference type="InterPro" id="IPR050982">
    <property type="entry name" value="Auxin_biosynth/cation_transpt"/>
</dbReference>
<dbReference type="InterPro" id="IPR036188">
    <property type="entry name" value="FAD/NAD-bd_sf"/>
</dbReference>
<dbReference type="InterPro" id="IPR020946">
    <property type="entry name" value="Flavin_mOase-like"/>
</dbReference>
<dbReference type="PANTHER" id="PTHR43539">
    <property type="entry name" value="FLAVIN-BINDING MONOOXYGENASE-LIKE PROTEIN (AFU_ORTHOLOGUE AFUA_4G09220)"/>
    <property type="match status" value="1"/>
</dbReference>
<dbReference type="PANTHER" id="PTHR43539:SF78">
    <property type="entry name" value="FLAVIN-CONTAINING MONOOXYGENASE"/>
    <property type="match status" value="1"/>
</dbReference>
<dbReference type="Pfam" id="PF00743">
    <property type="entry name" value="FMO-like"/>
    <property type="match status" value="1"/>
</dbReference>
<dbReference type="PRINTS" id="PR00368">
    <property type="entry name" value="FADPNR"/>
</dbReference>
<dbReference type="PRINTS" id="PR00469">
    <property type="entry name" value="PNDRDTASEII"/>
</dbReference>
<dbReference type="SUPFAM" id="SSF51905">
    <property type="entry name" value="FAD/NAD(P)-binding domain"/>
    <property type="match status" value="1"/>
</dbReference>
<organism>
    <name type="scientific">Oryza sativa subsp. japonica</name>
    <name type="common">Rice</name>
    <dbReference type="NCBI Taxonomy" id="39947"/>
    <lineage>
        <taxon>Eukaryota</taxon>
        <taxon>Viridiplantae</taxon>
        <taxon>Streptophyta</taxon>
        <taxon>Embryophyta</taxon>
        <taxon>Tracheophyta</taxon>
        <taxon>Spermatophyta</taxon>
        <taxon>Magnoliopsida</taxon>
        <taxon>Liliopsida</taxon>
        <taxon>Poales</taxon>
        <taxon>Poaceae</taxon>
        <taxon>BOP clade</taxon>
        <taxon>Oryzoideae</taxon>
        <taxon>Oryzeae</taxon>
        <taxon>Oryzinae</taxon>
        <taxon>Oryza</taxon>
        <taxon>Oryza sativa</taxon>
    </lineage>
</organism>
<proteinExistence type="evidence at protein level"/>
<protein>
    <recommendedName>
        <fullName evidence="6">Indole-3-pyruvate monooxygenase YUCCA1</fullName>
        <shortName evidence="4 5">OsYUCCA1</shortName>
        <ecNumber evidence="7">1.14.13.168</ecNumber>
    </recommendedName>
    <alternativeName>
        <fullName evidence="6">Flavin-containing monooxygenase YUCCA1</fullName>
    </alternativeName>
</protein>
<evidence type="ECO:0000255" key="1"/>
<evidence type="ECO:0000269" key="2">
    <source>
    </source>
</evidence>
<evidence type="ECO:0000269" key="3">
    <source>
    </source>
</evidence>
<evidence type="ECO:0000303" key="4">
    <source>
    </source>
</evidence>
<evidence type="ECO:0000303" key="5">
    <source>
    </source>
</evidence>
<evidence type="ECO:0000305" key="6"/>
<evidence type="ECO:0000305" key="7">
    <source>
    </source>
</evidence>
<evidence type="ECO:0000312" key="8">
    <source>
        <dbReference type="EMBL" id="BAD68007.1"/>
    </source>
</evidence>
<evidence type="ECO:0000312" key="9">
    <source>
        <dbReference type="EMBL" id="BAS73400.1"/>
    </source>
</evidence>
<sequence length="406" mass="44388">MDNKPAQERRETWVPGAVIVGAGPSGLAAAACLAARGVPATVLERSDSLASTWRHRMYDRLALHLPKRFCELPLLPFPEEYPTYPSKDQFVAYMEAYAAAAGVAPRFGATVEEAAFDAAVGAWRVRLDGGEVLMARWLVVATGENAEPRVPDFPGMQKFAGCAMHTSEYKSGEQFAGKKVLVVGCGNSGMEVSLDLCRHGAKPSMVVRNTVHVLPREMFGLSTFGIAMALLRWLPVQLVDRFLLTAAHLILGNTGQFGLRRPKTGPIELKNLTGRTPVLDVGTLDHIKSGKIKVVGAVKEMTRQGVRFTDGKEEQFDTIILATGYRSNVPSWLKDAGDLFTREGISKVPFPNSWRGRNGLYTVGFTQRGLLGTSSDALNVAKDIHCQWRERDRSAINVLEISNSSF</sequence>
<comment type="function">
    <text evidence="2 3 7">Involved in auxin biosynthesis (PubMed:17220367, PubMed:29740464). Converts the indole-3-pyruvic acid (IPA) produced by the TAA family to indole-3-acetic acid (IAA) (Probable). Functions downstream of TAR2 in auxin biosynthesis (PubMed:29740464). Functions upstream of WOX11, a transcription factor that promotes the development of crown roots (PubMed:29740464).</text>
</comment>
<comment type="catalytic activity">
    <reaction evidence="7">
        <text>indole-3-pyruvate + NADPH + O2 + H(+) = (indol-3-yl)acetate + CO2 + NADP(+) + H2O</text>
        <dbReference type="Rhea" id="RHEA:34331"/>
        <dbReference type="ChEBI" id="CHEBI:15377"/>
        <dbReference type="ChEBI" id="CHEBI:15378"/>
        <dbReference type="ChEBI" id="CHEBI:15379"/>
        <dbReference type="ChEBI" id="CHEBI:16526"/>
        <dbReference type="ChEBI" id="CHEBI:17640"/>
        <dbReference type="ChEBI" id="CHEBI:30854"/>
        <dbReference type="ChEBI" id="CHEBI:57783"/>
        <dbReference type="ChEBI" id="CHEBI:58349"/>
        <dbReference type="EC" id="1.14.13.168"/>
    </reaction>
</comment>
<comment type="cofactor">
    <cofactor evidence="6">
        <name>FAD</name>
        <dbReference type="ChEBI" id="CHEBI:57692"/>
    </cofactor>
</comment>
<comment type="alternative products">
    <event type="alternative splicing"/>
    <isoform>
        <id>A0A0P0V5U9-1</id>
        <name>1</name>
        <sequence type="displayed"/>
    </isoform>
    <isoform>
        <id>A0A0P0V5U9-2</id>
        <name>2</name>
        <sequence type="described" ref="VSP_059850"/>
    </isoform>
</comment>
<comment type="tissue specificity">
    <text evidence="2">Expressed in coleoptile tips, root tips, leaf blade tips, shoot apical meristem, vasculature of stems and flowers.</text>
</comment>
<comment type="miscellaneous">
    <text evidence="2 3">Calli overexpressing YUCCA1 exhibit high levels of auxin, low regeneration frequency, overgrowing roots, and abnormal root morphology (PubMed:17220367, PubMed:29740464). Plants silencing YUCCA1 exhibit severe dwarfism, inhibition of shoot elongation and root formation and elongation (PubMed:17220367).</text>
</comment>
<comment type="similarity">
    <text evidence="6">Belongs to the FMO family.</text>
</comment>
<comment type="sequence caution" evidence="6">
    <conflict type="erroneous gene model prediction">
        <sequence resource="EMBL-CDS" id="BAH91211"/>
    </conflict>
</comment>
<keyword id="KW-0025">Alternative splicing</keyword>
<keyword id="KW-0274">FAD</keyword>
<keyword id="KW-0285">Flavoprotein</keyword>
<keyword id="KW-0503">Monooxygenase</keyword>
<keyword id="KW-0521">NADP</keyword>
<keyword id="KW-0560">Oxidoreductase</keyword>
<keyword id="KW-1185">Reference proteome</keyword>
<reference key="1">
    <citation type="journal article" date="2002" name="Nature">
        <title>The genome sequence and structure of rice chromosome 1.</title>
        <authorList>
            <person name="Sasaki T."/>
            <person name="Matsumoto T."/>
            <person name="Yamamoto K."/>
            <person name="Sakata K."/>
            <person name="Baba T."/>
            <person name="Katayose Y."/>
            <person name="Wu J."/>
            <person name="Niimura Y."/>
            <person name="Cheng Z."/>
            <person name="Nagamura Y."/>
            <person name="Antonio B.A."/>
            <person name="Kanamori H."/>
            <person name="Hosokawa S."/>
            <person name="Masukawa M."/>
            <person name="Arikawa K."/>
            <person name="Chiden Y."/>
            <person name="Hayashi M."/>
            <person name="Okamoto M."/>
            <person name="Ando T."/>
            <person name="Aoki H."/>
            <person name="Arita K."/>
            <person name="Hamada M."/>
            <person name="Harada C."/>
            <person name="Hijishita S."/>
            <person name="Honda M."/>
            <person name="Ichikawa Y."/>
            <person name="Idonuma A."/>
            <person name="Iijima M."/>
            <person name="Ikeda M."/>
            <person name="Ikeno M."/>
            <person name="Ito S."/>
            <person name="Ito T."/>
            <person name="Ito Y."/>
            <person name="Ito Y."/>
            <person name="Iwabuchi A."/>
            <person name="Kamiya K."/>
            <person name="Karasawa W."/>
            <person name="Katagiri S."/>
            <person name="Kikuta A."/>
            <person name="Kobayashi N."/>
            <person name="Kono I."/>
            <person name="Machita K."/>
            <person name="Maehara T."/>
            <person name="Mizuno H."/>
            <person name="Mizubayashi T."/>
            <person name="Mukai Y."/>
            <person name="Nagasaki H."/>
            <person name="Nakashima M."/>
            <person name="Nakama Y."/>
            <person name="Nakamichi Y."/>
            <person name="Nakamura M."/>
            <person name="Namiki N."/>
            <person name="Negishi M."/>
            <person name="Ohta I."/>
            <person name="Ono N."/>
            <person name="Saji S."/>
            <person name="Sakai K."/>
            <person name="Shibata M."/>
            <person name="Shimokawa T."/>
            <person name="Shomura A."/>
            <person name="Song J."/>
            <person name="Takazaki Y."/>
            <person name="Terasawa K."/>
            <person name="Tsuji K."/>
            <person name="Waki K."/>
            <person name="Yamagata H."/>
            <person name="Yamane H."/>
            <person name="Yoshiki S."/>
            <person name="Yoshihara R."/>
            <person name="Yukawa K."/>
            <person name="Zhong H."/>
            <person name="Iwama H."/>
            <person name="Endo T."/>
            <person name="Ito H."/>
            <person name="Hahn J.H."/>
            <person name="Kim H.-I."/>
            <person name="Eun M.-Y."/>
            <person name="Yano M."/>
            <person name="Jiang J."/>
            <person name="Gojobori T."/>
        </authorList>
    </citation>
    <scope>NUCLEOTIDE SEQUENCE [LARGE SCALE GENOMIC DNA]</scope>
    <source>
        <strain>cv. Nipponbare</strain>
    </source>
</reference>
<reference key="2">
    <citation type="journal article" date="2005" name="Nature">
        <title>The map-based sequence of the rice genome.</title>
        <authorList>
            <consortium name="International rice genome sequencing project (IRGSP)"/>
        </authorList>
    </citation>
    <scope>NUCLEOTIDE SEQUENCE [LARGE SCALE GENOMIC DNA]</scope>
    <source>
        <strain>cv. Nipponbare</strain>
    </source>
</reference>
<reference key="3">
    <citation type="journal article" date="2008" name="Nucleic Acids Res.">
        <title>The rice annotation project database (RAP-DB): 2008 update.</title>
        <authorList>
            <consortium name="The rice annotation project (RAP)"/>
        </authorList>
    </citation>
    <scope>GENOME REANNOTATION</scope>
    <source>
        <strain>cv. Nipponbare</strain>
    </source>
</reference>
<reference key="4">
    <citation type="journal article" date="2013" name="Rice">
        <title>Improvement of the Oryza sativa Nipponbare reference genome using next generation sequence and optical map data.</title>
        <authorList>
            <person name="Kawahara Y."/>
            <person name="de la Bastide M."/>
            <person name="Hamilton J.P."/>
            <person name="Kanamori H."/>
            <person name="McCombie W.R."/>
            <person name="Ouyang S."/>
            <person name="Schwartz D.C."/>
            <person name="Tanaka T."/>
            <person name="Wu J."/>
            <person name="Zhou S."/>
            <person name="Childs K.L."/>
            <person name="Davidson R.M."/>
            <person name="Lin H."/>
            <person name="Quesada-Ocampo L."/>
            <person name="Vaillancourt B."/>
            <person name="Sakai H."/>
            <person name="Lee S.S."/>
            <person name="Kim J."/>
            <person name="Numa H."/>
            <person name="Itoh T."/>
            <person name="Buell C.R."/>
            <person name="Matsumoto T."/>
        </authorList>
    </citation>
    <scope>GENOME REANNOTATION</scope>
    <source>
        <strain>cv. Nipponbare</strain>
    </source>
</reference>
<reference key="5">
    <citation type="journal article" date="2003" name="Science">
        <title>Collection, mapping, and annotation of over 28,000 cDNA clones from japonica rice.</title>
        <authorList>
            <consortium name="The rice full-length cDNA consortium"/>
        </authorList>
    </citation>
    <scope>NUCLEOTIDE SEQUENCE [LARGE SCALE MRNA] (ISOFORM 2)</scope>
    <source>
        <strain>cv. Nipponbare</strain>
    </source>
</reference>
<reference key="6">
    <citation type="journal article" date="2007" name="Plant Physiol.">
        <title>Auxin biosynthesis by the YUCCA genes in rice.</title>
        <authorList>
            <person name="Yamamoto Y."/>
            <person name="Kamiya N."/>
            <person name="Morinaka Y."/>
            <person name="Matsuoka M."/>
            <person name="Sazuka T."/>
        </authorList>
    </citation>
    <scope>FUNCTION</scope>
    <scope>CATALYTIC ACTIVITY</scope>
    <scope>TISSUE SPECIFICITY</scope>
</reference>
<reference key="7">
    <citation type="journal article" date="2018" name="Front. Plant Sci.">
        <title>The YUCCA-auxin-WOX11 module controls crown root development in rice.</title>
        <authorList>
            <person name="Zhang T."/>
            <person name="Li R."/>
            <person name="Xing J."/>
            <person name="Yan L."/>
            <person name="Wang R."/>
            <person name="Zhao Y."/>
        </authorList>
    </citation>
    <scope>FUNCTION</scope>
</reference>
<accession>A0A0P0V5U9</accession>
<accession>C7IW71</accession>
<accession>Q5VRB9</accession>
<gene>
    <name evidence="4 5" type="primary">YUCCA1</name>
    <name evidence="9" type="ordered locus">Os01g0645400</name>
    <name evidence="6" type="ordered locus">LOC_Os01g45760</name>
    <name evidence="8" type="ORF">P0707D10.26</name>
</gene>